<feature type="chain" id="PRO_0000070180" description="Trace amine-associated receptor 8c">
    <location>
        <begin position="1"/>
        <end position="344"/>
    </location>
</feature>
<feature type="topological domain" description="Extracellular" evidence="3">
    <location>
        <begin position="1"/>
        <end position="36"/>
    </location>
</feature>
<feature type="transmembrane region" description="Helical; Name=1" evidence="3">
    <location>
        <begin position="37"/>
        <end position="57"/>
    </location>
</feature>
<feature type="topological domain" description="Cytoplasmic" evidence="3">
    <location>
        <begin position="58"/>
        <end position="67"/>
    </location>
</feature>
<feature type="transmembrane region" description="Helical; Name=2" evidence="3">
    <location>
        <begin position="68"/>
        <end position="88"/>
    </location>
</feature>
<feature type="topological domain" description="Extracellular" evidence="3">
    <location>
        <begin position="89"/>
        <end position="102"/>
    </location>
</feature>
<feature type="transmembrane region" description="Helical; Name=3" evidence="3">
    <location>
        <begin position="103"/>
        <end position="127"/>
    </location>
</feature>
<feature type="topological domain" description="Cytoplasmic" evidence="3">
    <location>
        <begin position="128"/>
        <end position="146"/>
    </location>
</feature>
<feature type="transmembrane region" description="Helical; Name=4" evidence="3">
    <location>
        <begin position="147"/>
        <end position="167"/>
    </location>
</feature>
<feature type="topological domain" description="Extracellular" evidence="3">
    <location>
        <begin position="168"/>
        <end position="196"/>
    </location>
</feature>
<feature type="transmembrane region" description="Helical; Name=5" evidence="3">
    <location>
        <begin position="197"/>
        <end position="217"/>
    </location>
</feature>
<feature type="topological domain" description="Cytoplasmic" evidence="3">
    <location>
        <begin position="218"/>
        <end position="260"/>
    </location>
</feature>
<feature type="transmembrane region" description="Helical; Name=6" evidence="3">
    <location>
        <begin position="261"/>
        <end position="281"/>
    </location>
</feature>
<feature type="topological domain" description="Extracellular" evidence="3">
    <location>
        <begin position="282"/>
        <end position="295"/>
    </location>
</feature>
<feature type="transmembrane region" description="Helical; Name=7" evidence="3">
    <location>
        <begin position="296"/>
        <end position="319"/>
    </location>
</feature>
<feature type="topological domain" description="Cytoplasmic" evidence="3">
    <location>
        <begin position="320"/>
        <end position="344"/>
    </location>
</feature>
<feature type="glycosylation site" description="N-linked (GlcNAc...) asparagine" evidence="3">
    <location>
        <position position="4"/>
    </location>
</feature>
<feature type="glycosylation site" description="N-linked (GlcNAc...) asparagine" evidence="3">
    <location>
        <position position="18"/>
    </location>
</feature>
<feature type="disulfide bond" evidence="1">
    <location>
        <begin position="21"/>
        <end position="185"/>
    </location>
</feature>
<feature type="disulfide bond" evidence="4">
    <location>
        <begin position="96"/>
        <end position="189"/>
    </location>
</feature>
<organism>
    <name type="scientific">Rattus norvegicus</name>
    <name type="common">Rat</name>
    <dbReference type="NCBI Taxonomy" id="10116"/>
    <lineage>
        <taxon>Eukaryota</taxon>
        <taxon>Metazoa</taxon>
        <taxon>Chordata</taxon>
        <taxon>Craniata</taxon>
        <taxon>Vertebrata</taxon>
        <taxon>Euteleostomi</taxon>
        <taxon>Mammalia</taxon>
        <taxon>Eutheria</taxon>
        <taxon>Euarchontoglires</taxon>
        <taxon>Glires</taxon>
        <taxon>Rodentia</taxon>
        <taxon>Myomorpha</taxon>
        <taxon>Muroidea</taxon>
        <taxon>Muridae</taxon>
        <taxon>Murinae</taxon>
        <taxon>Rattus</taxon>
    </lineage>
</organism>
<gene>
    <name evidence="7 9" type="primary">Taar8c</name>
    <name evidence="6" type="synonym">Ta10</name>
    <name evidence="6" type="synonym">Tar10</name>
    <name evidence="6" type="synonym">Trar10</name>
</gene>
<proteinExistence type="inferred from homology"/>
<keyword id="KW-1003">Cell membrane</keyword>
<keyword id="KW-1015">Disulfide bond</keyword>
<keyword id="KW-0297">G-protein coupled receptor</keyword>
<keyword id="KW-0325">Glycoprotein</keyword>
<keyword id="KW-0472">Membrane</keyword>
<keyword id="KW-0675">Receptor</keyword>
<keyword id="KW-1185">Reference proteome</keyword>
<keyword id="KW-0807">Transducer</keyword>
<keyword id="KW-0812">Transmembrane</keyword>
<keyword id="KW-1133">Transmembrane helix</keyword>
<sequence length="344" mass="38016">MTSNFSQATLQLCYENVNASCIKTPYSPGLRVLLYMVFGFGAVLAVCGNLLVVISVLHFKQLHSPANFLIASLASADFLVGISVMPFSMVRSIESCWYFGDTFCSLHSCCDVAFCYSSALHLCFISVDRYIAVTDPLVYPTKFTVSVSGICISISWILPLVYSSAVFYTGISAMGIENLVSALNCVGGCQVVVNQDWVLISFLLFFIPTLVMIILYSKIFLVAKQQAVKIETSVSGSKGESSLESHKARVAKRERKAAKTLGVTVLAFIVSWLPYTIDTLIDAFMGFITPAYVYEFCCWSAYYNSAMNPLIYAFFYPWFRKAMKLILSGKILKGHSSTTSLFSE</sequence>
<accession>Q923Y0</accession>
<dbReference type="EMBL" id="AF380198">
    <property type="protein sequence ID" value="AAK71249.1"/>
    <property type="molecule type" value="Genomic_DNA"/>
</dbReference>
<dbReference type="RefSeq" id="NP_783190.1">
    <property type="nucleotide sequence ID" value="NM_175600.1"/>
</dbReference>
<dbReference type="SMR" id="Q923Y0"/>
<dbReference type="FunCoup" id="Q923Y0">
    <property type="interactions" value="32"/>
</dbReference>
<dbReference type="STRING" id="10116.ENSRNOP00000075381"/>
<dbReference type="GlyCosmos" id="Q923Y0">
    <property type="glycosylation" value="2 sites, No reported glycans"/>
</dbReference>
<dbReference type="GlyGen" id="Q923Y0">
    <property type="glycosylation" value="2 sites"/>
</dbReference>
<dbReference type="PaxDb" id="10116-ENSRNOP00000044937"/>
<dbReference type="GeneID" id="319105"/>
<dbReference type="KEGG" id="rno:319105"/>
<dbReference type="AGR" id="RGD:631390"/>
<dbReference type="CTD" id="494546"/>
<dbReference type="RGD" id="631390">
    <property type="gene designation" value="Taar8c"/>
</dbReference>
<dbReference type="eggNOG" id="KOG3656">
    <property type="taxonomic scope" value="Eukaryota"/>
</dbReference>
<dbReference type="InParanoid" id="Q923Y0"/>
<dbReference type="OrthoDB" id="5959645at2759"/>
<dbReference type="PhylomeDB" id="Q923Y0"/>
<dbReference type="Reactome" id="R-RNO-375280">
    <property type="pathway name" value="Amine ligand-binding receptors"/>
</dbReference>
<dbReference type="PRO" id="PR:Q923Y0"/>
<dbReference type="Proteomes" id="UP000002494">
    <property type="component" value="Unplaced"/>
</dbReference>
<dbReference type="GO" id="GO:0005886">
    <property type="term" value="C:plasma membrane"/>
    <property type="evidence" value="ECO:0000318"/>
    <property type="project" value="GO_Central"/>
</dbReference>
<dbReference type="GO" id="GO:0001594">
    <property type="term" value="F:trace-amine receptor activity"/>
    <property type="evidence" value="ECO:0000314"/>
    <property type="project" value="UniProtKB"/>
</dbReference>
<dbReference type="GO" id="GO:0007186">
    <property type="term" value="P:G protein-coupled receptor signaling pathway"/>
    <property type="evidence" value="ECO:0000318"/>
    <property type="project" value="GO_Central"/>
</dbReference>
<dbReference type="FunFam" id="1.20.1070.10:FF:000030">
    <property type="entry name" value="trace amine-associated receptor 1"/>
    <property type="match status" value="1"/>
</dbReference>
<dbReference type="Gene3D" id="1.20.1070.10">
    <property type="entry name" value="Rhodopsin 7-helix transmembrane proteins"/>
    <property type="match status" value="1"/>
</dbReference>
<dbReference type="InterPro" id="IPR000276">
    <property type="entry name" value="GPCR_Rhodpsn"/>
</dbReference>
<dbReference type="InterPro" id="IPR017452">
    <property type="entry name" value="GPCR_Rhodpsn_7TM"/>
</dbReference>
<dbReference type="InterPro" id="IPR050569">
    <property type="entry name" value="TAAR"/>
</dbReference>
<dbReference type="InterPro" id="IPR009132">
    <property type="entry name" value="TAAR_fam"/>
</dbReference>
<dbReference type="PANTHER" id="PTHR24249">
    <property type="entry name" value="HISTAMINE RECEPTOR-RELATED G-PROTEIN COUPLED RECEPTOR"/>
    <property type="match status" value="1"/>
</dbReference>
<dbReference type="PANTHER" id="PTHR24249:SF405">
    <property type="entry name" value="TRACE AMINE-ASSOCIATED RECEPTOR 8"/>
    <property type="match status" value="1"/>
</dbReference>
<dbReference type="Pfam" id="PF00001">
    <property type="entry name" value="7tm_1"/>
    <property type="match status" value="1"/>
</dbReference>
<dbReference type="PRINTS" id="PR00237">
    <property type="entry name" value="GPCRRHODOPSN"/>
</dbReference>
<dbReference type="PRINTS" id="PR01830">
    <property type="entry name" value="TRACEAMINER"/>
</dbReference>
<dbReference type="SMART" id="SM01381">
    <property type="entry name" value="7TM_GPCR_Srsx"/>
    <property type="match status" value="1"/>
</dbReference>
<dbReference type="SUPFAM" id="SSF81321">
    <property type="entry name" value="Family A G protein-coupled receptor-like"/>
    <property type="match status" value="1"/>
</dbReference>
<dbReference type="PROSITE" id="PS00237">
    <property type="entry name" value="G_PROTEIN_RECEP_F1_1"/>
    <property type="match status" value="1"/>
</dbReference>
<dbReference type="PROSITE" id="PS50262">
    <property type="entry name" value="G_PROTEIN_RECEP_F1_2"/>
    <property type="match status" value="1"/>
</dbReference>
<protein>
    <recommendedName>
        <fullName>Trace amine-associated receptor 8c</fullName>
        <shortName>TaR-8c</shortName>
        <shortName>Trace amine receptor 8c</shortName>
    </recommendedName>
    <alternativeName>
        <fullName evidence="6">Trace amine receptor 10</fullName>
        <shortName evidence="6">TaR-10</shortName>
    </alternativeName>
</protein>
<evidence type="ECO:0000250" key="1">
    <source>
        <dbReference type="UniProtKB" id="Q5QD04"/>
    </source>
</evidence>
<evidence type="ECO:0000250" key="2">
    <source>
        <dbReference type="UniProtKB" id="Q5QD06"/>
    </source>
</evidence>
<evidence type="ECO:0000255" key="3"/>
<evidence type="ECO:0000255" key="4">
    <source>
        <dbReference type="PROSITE-ProRule" id="PRU00521"/>
    </source>
</evidence>
<evidence type="ECO:0000269" key="5">
    <source>
    </source>
</evidence>
<evidence type="ECO:0000303" key="6">
    <source>
    </source>
</evidence>
<evidence type="ECO:0000303" key="7">
    <source>
    </source>
</evidence>
<evidence type="ECO:0000305" key="8"/>
<evidence type="ECO:0000312" key="9">
    <source>
        <dbReference type="RGD" id="631390"/>
    </source>
</evidence>
<reference key="1">
    <citation type="journal article" date="2001" name="Proc. Natl. Acad. Sci. U.S.A.">
        <title>Trace amines: identification of a family of mammalian G protein-coupled receptors.</title>
        <authorList>
            <person name="Borowsky B."/>
            <person name="Adham N."/>
            <person name="Jones K.A."/>
            <person name="Raddatz R."/>
            <person name="Artymyshyn R."/>
            <person name="Ogozalek K.L."/>
            <person name="Durkin M.M."/>
            <person name="Lakhlani P.P."/>
            <person name="Bonini J.A."/>
            <person name="Pathirana S."/>
            <person name="Boyle N."/>
            <person name="Pu X."/>
            <person name="Kouranova E."/>
            <person name="Lichtblau H."/>
            <person name="Ochoa F.Y."/>
            <person name="Branchek T.A."/>
            <person name="Gerald C."/>
        </authorList>
    </citation>
    <scope>NUCLEOTIDE SEQUENCE [GENOMIC DNA]</scope>
    <source>
        <strain>Sprague-Dawley</strain>
    </source>
</reference>
<reference key="2">
    <citation type="journal article" date="2012" name="ACS Chem. Biol.">
        <title>Agonists for 13 trace amine-associated receptors provide insight into the molecular basis of odor selectivity.</title>
        <authorList>
            <person name="Ferrero D.M."/>
            <person name="Wacker D."/>
            <person name="Roque M.A."/>
            <person name="Baldwin M.W."/>
            <person name="Stevens R.C."/>
            <person name="Liberles S.D."/>
        </authorList>
    </citation>
    <scope>FUNCTION</scope>
</reference>
<comment type="function">
    <text evidence="5 8">Olfactory receptor activated by trace amines, such as N-methylpiperidine and N,N-dimethylcyclohexylamine (PubMed:22545963). Trace amine compounds are enriched in animal body fluids and act on trace amine-associated receptors (TAARs) to elicit both intraspecific and interspecific innate behaviors (PubMed:22545963). Ligand-binding causes a conformation change that triggers signaling via G(s)-class of G alpha proteins (GNAL or GNAS) (Probable).</text>
</comment>
<comment type="subcellular location">
    <subcellularLocation>
        <location evidence="2">Cell membrane</location>
        <topology evidence="3">Multi-pass membrane protein</topology>
    </subcellularLocation>
</comment>
<comment type="similarity">
    <text evidence="4">Belongs to the G-protein coupled receptor 1 family.</text>
</comment>
<name>TAA8C_RAT</name>